<gene>
    <name type="ordered locus">Plut_1285</name>
</gene>
<name>Y1285_CHLL3</name>
<keyword id="KW-0963">Cytoplasm</keyword>
<keyword id="KW-0238">DNA-binding</keyword>
<keyword id="KW-1185">Reference proteome</keyword>
<accession>Q3B3D6</accession>
<dbReference type="EMBL" id="CP000096">
    <property type="protein sequence ID" value="ABB24145.1"/>
    <property type="molecule type" value="Genomic_DNA"/>
</dbReference>
<dbReference type="RefSeq" id="WP_011358017.1">
    <property type="nucleotide sequence ID" value="NC_007512.1"/>
</dbReference>
<dbReference type="SMR" id="Q3B3D6"/>
<dbReference type="STRING" id="319225.Plut_1285"/>
<dbReference type="KEGG" id="plt:Plut_1285"/>
<dbReference type="eggNOG" id="COG0718">
    <property type="taxonomic scope" value="Bacteria"/>
</dbReference>
<dbReference type="HOGENOM" id="CLU_140930_0_1_10"/>
<dbReference type="OrthoDB" id="9808738at2"/>
<dbReference type="Proteomes" id="UP000002709">
    <property type="component" value="Chromosome"/>
</dbReference>
<dbReference type="GO" id="GO:0043590">
    <property type="term" value="C:bacterial nucleoid"/>
    <property type="evidence" value="ECO:0007669"/>
    <property type="project" value="UniProtKB-UniRule"/>
</dbReference>
<dbReference type="GO" id="GO:0005829">
    <property type="term" value="C:cytosol"/>
    <property type="evidence" value="ECO:0007669"/>
    <property type="project" value="TreeGrafter"/>
</dbReference>
<dbReference type="GO" id="GO:0003677">
    <property type="term" value="F:DNA binding"/>
    <property type="evidence" value="ECO:0007669"/>
    <property type="project" value="UniProtKB-UniRule"/>
</dbReference>
<dbReference type="Gene3D" id="3.30.1310.10">
    <property type="entry name" value="Nucleoid-associated protein YbaB-like domain"/>
    <property type="match status" value="1"/>
</dbReference>
<dbReference type="HAMAP" id="MF_00274">
    <property type="entry name" value="DNA_YbaB_EbfC"/>
    <property type="match status" value="1"/>
</dbReference>
<dbReference type="InterPro" id="IPR036894">
    <property type="entry name" value="YbaB-like_sf"/>
</dbReference>
<dbReference type="InterPro" id="IPR004401">
    <property type="entry name" value="YbaB/EbfC"/>
</dbReference>
<dbReference type="NCBIfam" id="TIGR00103">
    <property type="entry name" value="DNA_YbaB_EbfC"/>
    <property type="match status" value="1"/>
</dbReference>
<dbReference type="PANTHER" id="PTHR33449">
    <property type="entry name" value="NUCLEOID-ASSOCIATED PROTEIN YBAB"/>
    <property type="match status" value="1"/>
</dbReference>
<dbReference type="PANTHER" id="PTHR33449:SF1">
    <property type="entry name" value="NUCLEOID-ASSOCIATED PROTEIN YBAB"/>
    <property type="match status" value="1"/>
</dbReference>
<dbReference type="Pfam" id="PF02575">
    <property type="entry name" value="YbaB_DNA_bd"/>
    <property type="match status" value="1"/>
</dbReference>
<dbReference type="PIRSF" id="PIRSF004555">
    <property type="entry name" value="UCP004555"/>
    <property type="match status" value="1"/>
</dbReference>
<dbReference type="SUPFAM" id="SSF82607">
    <property type="entry name" value="YbaB-like"/>
    <property type="match status" value="1"/>
</dbReference>
<protein>
    <recommendedName>
        <fullName evidence="1">Nucleoid-associated protein Plut_1285</fullName>
    </recommendedName>
</protein>
<sequence length="109" mass="11762">MGMPNFGDMMKQIQQAGEKMQDVQKQLEKLVTSGEAGGGMVKVTVNGKQRVLSLWIDPEIMDDAEMVQDLVLAAVNSALEASGRMAQEEISKVAGGMINPQDILKNLGQ</sequence>
<feature type="chain" id="PRO_1000003791" description="Nucleoid-associated protein Plut_1285">
    <location>
        <begin position="1"/>
        <end position="109"/>
    </location>
</feature>
<evidence type="ECO:0000255" key="1">
    <source>
        <dbReference type="HAMAP-Rule" id="MF_00274"/>
    </source>
</evidence>
<comment type="function">
    <text evidence="1">Binds to DNA and alters its conformation. May be involved in regulation of gene expression, nucleoid organization and DNA protection.</text>
</comment>
<comment type="subunit">
    <text evidence="1">Homodimer.</text>
</comment>
<comment type="subcellular location">
    <subcellularLocation>
        <location evidence="1">Cytoplasm</location>
        <location evidence="1">Nucleoid</location>
    </subcellularLocation>
</comment>
<comment type="similarity">
    <text evidence="1">Belongs to the YbaB/EbfC family.</text>
</comment>
<organism>
    <name type="scientific">Chlorobium luteolum (strain DSM 273 / BCRC 81028 / 2530)</name>
    <name type="common">Pelodictyon luteolum</name>
    <dbReference type="NCBI Taxonomy" id="319225"/>
    <lineage>
        <taxon>Bacteria</taxon>
        <taxon>Pseudomonadati</taxon>
        <taxon>Chlorobiota</taxon>
        <taxon>Chlorobiia</taxon>
        <taxon>Chlorobiales</taxon>
        <taxon>Chlorobiaceae</taxon>
        <taxon>Chlorobium/Pelodictyon group</taxon>
        <taxon>Pelodictyon</taxon>
    </lineage>
</organism>
<proteinExistence type="inferred from homology"/>
<reference key="1">
    <citation type="submission" date="2005-08" db="EMBL/GenBank/DDBJ databases">
        <title>Complete sequence of Pelodictyon luteolum DSM 273.</title>
        <authorList>
            <consortium name="US DOE Joint Genome Institute"/>
            <person name="Copeland A."/>
            <person name="Lucas S."/>
            <person name="Lapidus A."/>
            <person name="Barry K."/>
            <person name="Detter J.C."/>
            <person name="Glavina T."/>
            <person name="Hammon N."/>
            <person name="Israni S."/>
            <person name="Pitluck S."/>
            <person name="Bryant D."/>
            <person name="Schmutz J."/>
            <person name="Larimer F."/>
            <person name="Land M."/>
            <person name="Kyrpides N."/>
            <person name="Ivanova N."/>
            <person name="Richardson P."/>
        </authorList>
    </citation>
    <scope>NUCLEOTIDE SEQUENCE [LARGE SCALE GENOMIC DNA]</scope>
    <source>
        <strain>DSM 273 / BCRC 81028 / 2530</strain>
    </source>
</reference>